<accession>P51403</accession>
<comment type="function">
    <text evidence="1 4">Component of the ribosome, a large ribonucleoprotein complex responsible for the synthesis of proteins in the cell. The small ribosomal subunit (SSU) binds messenger RNAs (mRNAs) and translates the encoded message by selecting cognate aminoacyl-transfer RNA (tRNA) molecules. The large subunit (LSU) contains the ribosomal catalytic site termed the peptidyl transferase center (PTC), which catalyzes the formation of peptide bonds, thereby polymerizing the amino acids delivered by tRNAs into a polypeptide chain. The nascent polypeptides leave the ribosome through a tunnel in the LSU and interact with protein factors that function in enzymatic processing, targeting, and the membrane insertion of nascent chains at the exit of the ribosomal tunnel. Plays a role in the assembly and function of the 40S ribosomal subunit. Mutations in this protein affects the control of translational fidelity. Involved in nucleolar processing of pre-18S ribosomal RNA and ribosome assembly (By similarity). In complex with ztf-7, mediates the cold-warm shock response by promoting translocation of components of the RNA exosome from the nucleolus to nucleoplasm (PubMed:36763670).</text>
</comment>
<comment type="subunit">
    <text evidence="4">Interacts with ztf-7.</text>
</comment>
<comment type="disruption phenotype">
    <text evidence="4">RNAi-mediated knockdown results in a significant reduction of the mRNA levels of ztf-7 and blocking cold-warm shock-induced exosome translocation from the nucleolus to nucleoplasm.</text>
</comment>
<comment type="similarity">
    <text evidence="5">Belongs to the universal ribosomal protein uS5 family.</text>
</comment>
<sequence>MADRGGFQSGFGGRGGGRGGARPAGDRPAGRGGRGGRGGRGGRGGRAGRGGEKETEWTPVTKLGRLVKEKKITTLEEIYLNSLPIKEFEIIDALCSNLKDEVLKISPVQKQTTAGQRTRFKAFVAIGDHAGHVGLGVKCSKEVATAIRGAIVAAKLAVVPVRRGYWGNKIGLPHTVPCKVTGKCASVMVRLIPAPRGTGIVSAPVPKKLLHMAGIEDCYTAAKGSTATLGNFAKATYAALQRTYSYLTPDLWKEEALEKSPYQRHHEYLARN</sequence>
<feature type="chain" id="PRO_0000131677" description="Small ribosomal subunit protein uS5">
    <location>
        <begin position="1"/>
        <end position="272"/>
    </location>
</feature>
<feature type="domain" description="S5 DRBM" evidence="2">
    <location>
        <begin position="98"/>
        <end position="161"/>
    </location>
</feature>
<feature type="region of interest" description="Disordered" evidence="3">
    <location>
        <begin position="1"/>
        <end position="57"/>
    </location>
</feature>
<feature type="compositionally biased region" description="Gly residues" evidence="3">
    <location>
        <begin position="7"/>
        <end position="22"/>
    </location>
</feature>
<feature type="compositionally biased region" description="Gly residues" evidence="3">
    <location>
        <begin position="30"/>
        <end position="48"/>
    </location>
</feature>
<keyword id="KW-0002">3D-structure</keyword>
<keyword id="KW-1185">Reference proteome</keyword>
<keyword id="KW-0677">Repeat</keyword>
<keyword id="KW-0687">Ribonucleoprotein</keyword>
<keyword id="KW-0689">Ribosomal protein</keyword>
<proteinExistence type="evidence at protein level"/>
<organism>
    <name type="scientific">Caenorhabditis elegans</name>
    <dbReference type="NCBI Taxonomy" id="6239"/>
    <lineage>
        <taxon>Eukaryota</taxon>
        <taxon>Metazoa</taxon>
        <taxon>Ecdysozoa</taxon>
        <taxon>Nematoda</taxon>
        <taxon>Chromadorea</taxon>
        <taxon>Rhabditida</taxon>
        <taxon>Rhabditina</taxon>
        <taxon>Rhabditomorpha</taxon>
        <taxon>Rhabditoidea</taxon>
        <taxon>Rhabditidae</taxon>
        <taxon>Peloderinae</taxon>
        <taxon>Caenorhabditis</taxon>
    </lineage>
</organism>
<protein>
    <recommendedName>
        <fullName evidence="5">Small ribosomal subunit protein uS5</fullName>
    </recommendedName>
    <alternativeName>
        <fullName>40S ribosomal protein S2</fullName>
    </alternativeName>
</protein>
<name>RS2_CAEEL</name>
<dbReference type="EMBL" id="FO080908">
    <property type="protein sequence ID" value="CCD67711.1"/>
    <property type="molecule type" value="Genomic_DNA"/>
</dbReference>
<dbReference type="PIR" id="T34184">
    <property type="entry name" value="T34184"/>
</dbReference>
<dbReference type="RefSeq" id="NP_501322.1">
    <property type="nucleotide sequence ID" value="NM_068921.6"/>
</dbReference>
<dbReference type="PDB" id="9BH5">
    <property type="method" value="EM"/>
    <property type="resolution" value="2.63 A"/>
    <property type="chains" value="AC=1-272"/>
</dbReference>
<dbReference type="PDB" id="9CAI">
    <property type="method" value="EM"/>
    <property type="resolution" value="2.59 A"/>
    <property type="chains" value="AC=1-272"/>
</dbReference>
<dbReference type="PDBsum" id="9BH5"/>
<dbReference type="PDBsum" id="9CAI"/>
<dbReference type="EMDB" id="EMD-44533"/>
<dbReference type="EMDB" id="EMD-45392"/>
<dbReference type="SMR" id="P51403"/>
<dbReference type="BioGRID" id="42699">
    <property type="interactions" value="102"/>
</dbReference>
<dbReference type="DIP" id="DIP-25206N"/>
<dbReference type="FunCoup" id="P51403">
    <property type="interactions" value="2084"/>
</dbReference>
<dbReference type="IntAct" id="P51403">
    <property type="interactions" value="3"/>
</dbReference>
<dbReference type="MINT" id="P51403"/>
<dbReference type="STRING" id="6239.C49H3.11.1"/>
<dbReference type="iPTMnet" id="P51403"/>
<dbReference type="PaxDb" id="6239-C49H3.11.1"/>
<dbReference type="PeptideAtlas" id="P51403"/>
<dbReference type="EnsemblMetazoa" id="C49H3.11.1">
    <property type="protein sequence ID" value="C49H3.11.1"/>
    <property type="gene ID" value="WBGene00004471"/>
</dbReference>
<dbReference type="EnsemblMetazoa" id="C49H3.11.2">
    <property type="protein sequence ID" value="C49H3.11.2"/>
    <property type="gene ID" value="WBGene00004471"/>
</dbReference>
<dbReference type="GeneID" id="177583"/>
<dbReference type="KEGG" id="cel:CELE_C49H3.11"/>
<dbReference type="UCSC" id="C49H3.11.1">
    <property type="organism name" value="c. elegans"/>
</dbReference>
<dbReference type="AGR" id="WB:WBGene00004471"/>
<dbReference type="CTD" id="177583"/>
<dbReference type="WormBase" id="C49H3.11">
    <property type="protein sequence ID" value="CE04237"/>
    <property type="gene ID" value="WBGene00004471"/>
    <property type="gene designation" value="rps-2"/>
</dbReference>
<dbReference type="eggNOG" id="KOG0877">
    <property type="taxonomic scope" value="Eukaryota"/>
</dbReference>
<dbReference type="GeneTree" id="ENSGT00940000153095"/>
<dbReference type="HOGENOM" id="CLU_065898_0_2_1"/>
<dbReference type="InParanoid" id="P51403"/>
<dbReference type="OMA" id="DKEWTPV"/>
<dbReference type="OrthoDB" id="10253125at2759"/>
<dbReference type="PhylomeDB" id="P51403"/>
<dbReference type="Reactome" id="R-CEL-156827">
    <property type="pathway name" value="L13a-mediated translational silencing of Ceruloplasmin expression"/>
</dbReference>
<dbReference type="Reactome" id="R-CEL-1799339">
    <property type="pathway name" value="SRP-dependent cotranslational protein targeting to membrane"/>
</dbReference>
<dbReference type="Reactome" id="R-CEL-6791226">
    <property type="pathway name" value="Major pathway of rRNA processing in the nucleolus and cytosol"/>
</dbReference>
<dbReference type="Reactome" id="R-CEL-72649">
    <property type="pathway name" value="Translation initiation complex formation"/>
</dbReference>
<dbReference type="Reactome" id="R-CEL-72689">
    <property type="pathway name" value="Formation of a pool of free 40S subunits"/>
</dbReference>
<dbReference type="Reactome" id="R-CEL-72695">
    <property type="pathway name" value="Formation of the ternary complex, and subsequently, the 43S complex"/>
</dbReference>
<dbReference type="Reactome" id="R-CEL-72702">
    <property type="pathway name" value="Ribosomal scanning and start codon recognition"/>
</dbReference>
<dbReference type="Reactome" id="R-CEL-72706">
    <property type="pathway name" value="GTP hydrolysis and joining of the 60S ribosomal subunit"/>
</dbReference>
<dbReference type="Reactome" id="R-CEL-975956">
    <property type="pathway name" value="Nonsense Mediated Decay (NMD) independent of the Exon Junction Complex (EJC)"/>
</dbReference>
<dbReference type="Reactome" id="R-CEL-975957">
    <property type="pathway name" value="Nonsense Mediated Decay (NMD) enhanced by the Exon Junction Complex (EJC)"/>
</dbReference>
<dbReference type="SignaLink" id="P51403"/>
<dbReference type="PRO" id="PR:P51403"/>
<dbReference type="Proteomes" id="UP000001940">
    <property type="component" value="Chromosome IV"/>
</dbReference>
<dbReference type="Bgee" id="WBGene00004471">
    <property type="expression patterns" value="Expressed in germ line (C elegans) and 4 other cell types or tissues"/>
</dbReference>
<dbReference type="GO" id="GO:0022627">
    <property type="term" value="C:cytosolic small ribosomal subunit"/>
    <property type="evidence" value="ECO:0000318"/>
    <property type="project" value="GO_Central"/>
</dbReference>
<dbReference type="GO" id="GO:0003723">
    <property type="term" value="F:RNA binding"/>
    <property type="evidence" value="ECO:0007669"/>
    <property type="project" value="InterPro"/>
</dbReference>
<dbReference type="GO" id="GO:0003735">
    <property type="term" value="F:structural constituent of ribosome"/>
    <property type="evidence" value="ECO:0000318"/>
    <property type="project" value="GO_Central"/>
</dbReference>
<dbReference type="GO" id="GO:0006412">
    <property type="term" value="P:translation"/>
    <property type="evidence" value="ECO:0000318"/>
    <property type="project" value="GO_Central"/>
</dbReference>
<dbReference type="FunFam" id="3.30.160.20:FF:000002">
    <property type="entry name" value="40S ribosomal protein S2"/>
    <property type="match status" value="1"/>
</dbReference>
<dbReference type="FunFam" id="3.30.230.10:FF:000004">
    <property type="entry name" value="40S ribosomal protein S2"/>
    <property type="match status" value="1"/>
</dbReference>
<dbReference type="Gene3D" id="3.30.160.20">
    <property type="match status" value="1"/>
</dbReference>
<dbReference type="Gene3D" id="3.30.230.10">
    <property type="match status" value="1"/>
</dbReference>
<dbReference type="InterPro" id="IPR020568">
    <property type="entry name" value="Ribosomal_Su5_D2-typ_SF"/>
</dbReference>
<dbReference type="InterPro" id="IPR000851">
    <property type="entry name" value="Ribosomal_uS5"/>
</dbReference>
<dbReference type="InterPro" id="IPR005324">
    <property type="entry name" value="Ribosomal_uS5_C"/>
</dbReference>
<dbReference type="InterPro" id="IPR005711">
    <property type="entry name" value="Ribosomal_uS5_euk/arc"/>
</dbReference>
<dbReference type="InterPro" id="IPR013810">
    <property type="entry name" value="Ribosomal_uS5_N"/>
</dbReference>
<dbReference type="InterPro" id="IPR018192">
    <property type="entry name" value="Ribosomal_uS5_N_CS"/>
</dbReference>
<dbReference type="InterPro" id="IPR014721">
    <property type="entry name" value="Ribsml_uS5_D2-typ_fold_subgr"/>
</dbReference>
<dbReference type="NCBIfam" id="TIGR01020">
    <property type="entry name" value="uS5_euk_arch"/>
    <property type="match status" value="1"/>
</dbReference>
<dbReference type="PANTHER" id="PTHR13718:SF4">
    <property type="entry name" value="40S RIBOSOMAL PROTEIN S2"/>
    <property type="match status" value="1"/>
</dbReference>
<dbReference type="PANTHER" id="PTHR13718">
    <property type="entry name" value="RIBOSOMAL S SUBUNIT"/>
    <property type="match status" value="1"/>
</dbReference>
<dbReference type="Pfam" id="PF00333">
    <property type="entry name" value="Ribosomal_S5"/>
    <property type="match status" value="1"/>
</dbReference>
<dbReference type="Pfam" id="PF03719">
    <property type="entry name" value="Ribosomal_S5_C"/>
    <property type="match status" value="1"/>
</dbReference>
<dbReference type="SUPFAM" id="SSF54768">
    <property type="entry name" value="dsRNA-binding domain-like"/>
    <property type="match status" value="1"/>
</dbReference>
<dbReference type="SUPFAM" id="SSF54211">
    <property type="entry name" value="Ribosomal protein S5 domain 2-like"/>
    <property type="match status" value="1"/>
</dbReference>
<dbReference type="PROSITE" id="PS00585">
    <property type="entry name" value="RIBOSOMAL_S5"/>
    <property type="match status" value="1"/>
</dbReference>
<dbReference type="PROSITE" id="PS50881">
    <property type="entry name" value="S5_DSRBD"/>
    <property type="match status" value="1"/>
</dbReference>
<reference key="1">
    <citation type="journal article" date="1998" name="Science">
        <title>Genome sequence of the nematode C. elegans: a platform for investigating biology.</title>
        <authorList>
            <consortium name="The C. elegans sequencing consortium"/>
        </authorList>
    </citation>
    <scope>NUCLEOTIDE SEQUENCE [LARGE SCALE GENOMIC DNA]</scope>
    <source>
        <strain>Bristol N2</strain>
    </source>
</reference>
<reference key="2">
    <citation type="journal article" date="2023" name="PLoS Genet.">
        <title>A ZTF-7/RPS-2 complex mediates the cold-warm response in C. elegans.</title>
        <authorList>
            <person name="Xu T."/>
            <person name="Liao S."/>
            <person name="Huang M."/>
            <person name="Zhu C."/>
            <person name="Huang X."/>
            <person name="Jin Q."/>
            <person name="Xu D."/>
            <person name="Fu C."/>
            <person name="Chen X."/>
            <person name="Feng X."/>
            <person name="Guang S."/>
        </authorList>
    </citation>
    <scope>FUNCTION</scope>
    <scope>INTERACTION WITH ZTF-7</scope>
    <scope>DISRUPTION PHENOTYPE</scope>
</reference>
<gene>
    <name type="primary">rps-2</name>
    <name type="ORF">C49H3.11</name>
</gene>
<evidence type="ECO:0000250" key="1">
    <source>
        <dbReference type="UniProtKB" id="P25443"/>
    </source>
</evidence>
<evidence type="ECO:0000255" key="2">
    <source>
        <dbReference type="PROSITE-ProRule" id="PRU00268"/>
    </source>
</evidence>
<evidence type="ECO:0000256" key="3">
    <source>
        <dbReference type="SAM" id="MobiDB-lite"/>
    </source>
</evidence>
<evidence type="ECO:0000269" key="4">
    <source>
    </source>
</evidence>
<evidence type="ECO:0000305" key="5"/>